<keyword id="KW-0378">Hydrolase</keyword>
<keyword id="KW-0547">Nucleotide-binding</keyword>
<keyword id="KW-0548">Nucleotidyltransferase</keyword>
<keyword id="KW-1185">Reference proteome</keyword>
<keyword id="KW-0696">RNA-directed RNA polymerase</keyword>
<keyword id="KW-0808">Transferase</keyword>
<keyword id="KW-0693">Viral RNA replication</keyword>
<protein>
    <recommendedName>
        <fullName>RNA-directed RNA polymerase VP2</fullName>
        <ecNumber>2.7.7.48</ecNumber>
    </recommendedName>
</protein>
<feature type="chain" id="PRO_0000403276" description="RNA-directed RNA polymerase VP2">
    <location>
        <begin position="1"/>
        <end position="1233"/>
    </location>
</feature>
<feature type="domain" description="RdRp catalytic">
    <location>
        <begin position="1"/>
        <end position="775"/>
    </location>
</feature>
<organismHost>
    <name type="scientific">Aedes pseudoscutellaris</name>
    <name type="common">Mosquito</name>
    <name type="synonym">Stegomyia pseudoscutellaris</name>
    <dbReference type="NCBI Taxonomy" id="316597"/>
</organismHost>
<accession>Q2Y0E9</accession>
<name>RDRP_APRVF</name>
<gene>
    <name type="primary">S2</name>
</gene>
<sequence>MATEPNEINLRMTQTRMKQIEDTTFKIRRKHDDMYTYLINDIEATEMYPDTETPFRMKSSLNNTYIQVKCQIPKLIMQPPLYNNDMYPLNHNSTNFLEDRPFNYLCNFDWFEFLSRSKDELGMHYNMIRDLISMSSQTRYSNIWSNISGIIMYLRQYKRGFALRSILIRLLTYWNNFPFFDTWDGFKDVLPKTSTAWPLLFYAFMSVAFDYICENISEGDAIVCFQNHLENAQISYQDTKLEKKNGYTLWLKYECHNLRVALTPRYDYTGTVYGNFLKDTTEYIITDEFEENEIKMKNILNPSFYKILQQLRREIKTVEDIIRLLTICYSARDDRTYYGTLMELAISKAIKPQVAGSIVPKPIPTSWLQKDPKIVLSAKYPSTSFLSQMQEFYRRYYPALQREIDVHALSASFINFLSTASAGVGIELPEEIINMVKDKRLLYLLKKGSGKRVLQEALLVERYNDLDPIINDFVRLIKIVVRKQIERRQRGIAGIPNNVLKINQVTYEANKPFSKIARAPSHGKQSGNASDIHDLLFYTTQEDVSHIEVNGKRQMRGIVISSADVKGMDTHIQINAAMNQHLGAIEILDGIQYDVGPFRQTRAVIQDIQGNVYERNLNGGQQAIAFGLANFSQTTGINSKYFGQIPNQEGTFPSGLITTSNHHTQMLTLLIETAATTFTNEFGKSIAIAHLMILGDDVSLMLHGNDKDVNFFMKYLVEKFSQLGLILERDESRNFGVFLQQHVINGRFNGFSNRIAIFTSEDYKTRKSVQESCTEYNALIDDVIFRTYNVRKLLQFQRIHQFVVLSKYIFRVQNYKYEKLKAKLATRLNVFEYDLKPHNDSRENVQNQNMLRFIGIQIPYTYFQCSGGGEIPPESFQRKDGSFTYEYSIYSPKGKWLRKFLYDISCTIDEPKFRIDDEIMRMYNLDICDFLIQYNMLNIQEEIRATIIDRELISKLAMNLESLENSNARMISRRASESLRIMGIKLPANGVYGYQINERLVKVLQNIQQSDYEVKMVGDALFTAIMEKFDSHKVRMEKGDRLHNFTLDFSDKSDRLVINKKMIALHNISISKNMAPYSDAWMLYTCLNHTYNASSELSTALAHSQGHFKSFQYDRDMFAESVKIASKHGIGSLPMELFFEASNIRDSAQLKWIEAIKYYIQFKDYLYPYSINPRRLFFIPEQVSSVSSLLNQDNIPADANKKALMFRRAYAYVLSHPFRISGAKAIFVDDRIS</sequence>
<comment type="function">
    <text evidence="1">RNA-directed RNA polymerase that is involved in transcription and genome replication. Following infection, it catalyzes the synthesis of fully conservative plus strands. After core assembly, which consists in recruitment of one capped plus-strand for each genomic segments and polymerase complexes, the polymerase switches mode and catalyzes the synthesis of complementary minus-strands (By similarity).</text>
</comment>
<comment type="catalytic activity">
    <reaction>
        <text>RNA(n) + a ribonucleoside 5'-triphosphate = RNA(n+1) + diphosphate</text>
        <dbReference type="Rhea" id="RHEA:21248"/>
        <dbReference type="Rhea" id="RHEA-COMP:14527"/>
        <dbReference type="Rhea" id="RHEA-COMP:17342"/>
        <dbReference type="ChEBI" id="CHEBI:33019"/>
        <dbReference type="ChEBI" id="CHEBI:61557"/>
        <dbReference type="ChEBI" id="CHEBI:140395"/>
        <dbReference type="EC" id="2.7.7.48"/>
    </reaction>
</comment>
<comment type="subunit">
    <text evidence="1">Interacts with VP6.</text>
</comment>
<comment type="similarity">
    <text evidence="2">Belongs to the reoviridae RNA-directed RNA polymerase family.</text>
</comment>
<evidence type="ECO:0000250" key="1"/>
<evidence type="ECO:0000305" key="2"/>
<organism>
    <name type="scientific">Aedes pseudoscutellaris reovirus (isolate France)</name>
    <name type="common">ApRV</name>
    <dbReference type="NCBI Taxonomy" id="648170"/>
    <lineage>
        <taxon>Viruses</taxon>
        <taxon>Riboviria</taxon>
        <taxon>Orthornavirae</taxon>
        <taxon>Duplornaviricota</taxon>
        <taxon>Resentoviricetes</taxon>
        <taxon>Reovirales</taxon>
        <taxon>Spinareoviridae</taxon>
        <taxon>Dinovernavirus</taxon>
        <taxon>Aedes pseudoscutellaris reovirus</taxon>
    </lineage>
</organism>
<reference key="1">
    <citation type="journal article" date="2005" name="Virology">
        <title>Expansion of family Reoviridae to include nine-segmented dsRNA viruses: isolation and characterization of a new virus designated Aedes pseudoscutellaris reovirus assigned to a proposed genus (Dinovernavirus).</title>
        <authorList>
            <person name="Attoui H."/>
            <person name="Mohd Jaafar F."/>
            <person name="Belhouchet M."/>
            <person name="Biagini P."/>
            <person name="Cantaloube J.F."/>
            <person name="de Micco P."/>
            <person name="de Lamballerie X."/>
        </authorList>
    </citation>
    <scope>NUCLEOTIDE SEQUENCE [GENOMIC RNA]</scope>
</reference>
<dbReference type="EC" id="2.7.7.48"/>
<dbReference type="EMBL" id="DQ087277">
    <property type="protein sequence ID" value="AAZ94069.1"/>
    <property type="molecule type" value="Genomic_RNA"/>
</dbReference>
<dbReference type="RefSeq" id="YP_443936.1">
    <property type="nucleotide sequence ID" value="NC_007667.1"/>
</dbReference>
<dbReference type="SMR" id="Q2Y0E9"/>
<dbReference type="KEGG" id="vg:5076689"/>
<dbReference type="Proteomes" id="UP000001676">
    <property type="component" value="Genome"/>
</dbReference>
<dbReference type="GO" id="GO:0016787">
    <property type="term" value="F:hydrolase activity"/>
    <property type="evidence" value="ECO:0007669"/>
    <property type="project" value="UniProtKB-KW"/>
</dbReference>
<dbReference type="GO" id="GO:0000166">
    <property type="term" value="F:nucleotide binding"/>
    <property type="evidence" value="ECO:0007669"/>
    <property type="project" value="UniProtKB-KW"/>
</dbReference>
<dbReference type="GO" id="GO:0003968">
    <property type="term" value="F:RNA-directed RNA polymerase activity"/>
    <property type="evidence" value="ECO:0007669"/>
    <property type="project" value="UniProtKB-KW"/>
</dbReference>
<dbReference type="Gene3D" id="3.90.1850.10">
    <property type="entry name" value="RNA-directed RNA polymerase lambda-3"/>
    <property type="match status" value="1"/>
</dbReference>
<dbReference type="InterPro" id="IPR054002">
    <property type="entry name" value="RdRP_C"/>
</dbReference>
<dbReference type="InterPro" id="IPR054006">
    <property type="entry name" value="RdRP_N"/>
</dbReference>
<dbReference type="Pfam" id="PF22213">
    <property type="entry name" value="CPV_RdRP_C"/>
    <property type="match status" value="1"/>
</dbReference>
<dbReference type="Pfam" id="PF22209">
    <property type="entry name" value="CPV_RdRP_N"/>
    <property type="match status" value="1"/>
</dbReference>
<dbReference type="Pfam" id="PF22212">
    <property type="entry name" value="CPV_RdRP_pol_dom"/>
    <property type="match status" value="1"/>
</dbReference>
<proteinExistence type="inferred from homology"/>